<organism>
    <name type="scientific">Salmonella paratyphi B (strain ATCC BAA-1250 / SPB7)</name>
    <dbReference type="NCBI Taxonomy" id="1016998"/>
    <lineage>
        <taxon>Bacteria</taxon>
        <taxon>Pseudomonadati</taxon>
        <taxon>Pseudomonadota</taxon>
        <taxon>Gammaproteobacteria</taxon>
        <taxon>Enterobacterales</taxon>
        <taxon>Enterobacteriaceae</taxon>
        <taxon>Salmonella</taxon>
    </lineage>
</organism>
<protein>
    <recommendedName>
        <fullName evidence="1">Xaa-Pro dipeptidase</fullName>
        <shortName evidence="1">X-Pro dipeptidase</shortName>
        <ecNumber evidence="1">3.4.13.9</ecNumber>
    </recommendedName>
    <alternativeName>
        <fullName evidence="1">Imidodipeptidase</fullName>
    </alternativeName>
    <alternativeName>
        <fullName evidence="1">Proline dipeptidase</fullName>
        <shortName evidence="1">Prolidase</shortName>
    </alternativeName>
</protein>
<feature type="chain" id="PRO_1000085885" description="Xaa-Pro dipeptidase">
    <location>
        <begin position="1"/>
        <end position="443"/>
    </location>
</feature>
<feature type="binding site" evidence="1">
    <location>
        <position position="246"/>
    </location>
    <ligand>
        <name>Mn(2+)</name>
        <dbReference type="ChEBI" id="CHEBI:29035"/>
        <label>2</label>
    </ligand>
</feature>
<feature type="binding site" evidence="1">
    <location>
        <position position="257"/>
    </location>
    <ligand>
        <name>Mn(2+)</name>
        <dbReference type="ChEBI" id="CHEBI:29035"/>
        <label>1</label>
    </ligand>
</feature>
<feature type="binding site" evidence="1">
    <location>
        <position position="257"/>
    </location>
    <ligand>
        <name>Mn(2+)</name>
        <dbReference type="ChEBI" id="CHEBI:29035"/>
        <label>2</label>
    </ligand>
</feature>
<feature type="binding site" evidence="1">
    <location>
        <position position="339"/>
    </location>
    <ligand>
        <name>Mn(2+)</name>
        <dbReference type="ChEBI" id="CHEBI:29035"/>
        <label>1</label>
    </ligand>
</feature>
<feature type="binding site" evidence="1">
    <location>
        <position position="384"/>
    </location>
    <ligand>
        <name>Mn(2+)</name>
        <dbReference type="ChEBI" id="CHEBI:29035"/>
        <label>1</label>
    </ligand>
</feature>
<feature type="binding site" evidence="1">
    <location>
        <position position="423"/>
    </location>
    <ligand>
        <name>Mn(2+)</name>
        <dbReference type="ChEBI" id="CHEBI:29035"/>
        <label>1</label>
    </ligand>
</feature>
<feature type="binding site" evidence="1">
    <location>
        <position position="423"/>
    </location>
    <ligand>
        <name>Mn(2+)</name>
        <dbReference type="ChEBI" id="CHEBI:29035"/>
        <label>2</label>
    </ligand>
</feature>
<sequence length="443" mass="50117">MESLAALYKNHIVTLQERTRDVLARFKLDALLIHSGELFNVFLDDHPYPFKVNPQFKAWVPVTQVPNCWLLVDGVNKPKLWFYLPVDYWHNVEPLPTSFWTEEVEVVALPKADGIGSQLPAARGNIGYIGPVPERALQLDIAASNINPKGVIDYLHYYRAYKTDYELACMREAQKMAVSGHRAAEEAFRSGMSEFDINLAYLTATGHRDTDVPYSNIVALNEHAAVLHYTKLDHQAPSEMRSFLLDAGAEYNGYAADLTRTWSAKSDNDYAHLVKDVNDEQLALIATMKAGVSYVDYHIQFHQRIAKLLRKHQIITDMSEEAMVENDLTGPFMPHGIGHPLGLQVHDVAGFMQDDSGTHLAAPSKYPYLRCTRVLQPRMVLTIEPGIYFIESLLAPWCEGPFSKHFNWQKIEALKPFGGIRIEDNVVIHENGVENMTRDLKLA</sequence>
<gene>
    <name evidence="1" type="primary">pepQ</name>
    <name type="ordered locus">SPAB_04940</name>
</gene>
<accession>A9MYB1</accession>
<keyword id="KW-0224">Dipeptidase</keyword>
<keyword id="KW-0378">Hydrolase</keyword>
<keyword id="KW-0464">Manganese</keyword>
<keyword id="KW-0479">Metal-binding</keyword>
<keyword id="KW-0482">Metalloprotease</keyword>
<keyword id="KW-0645">Protease</keyword>
<reference key="1">
    <citation type="submission" date="2007-11" db="EMBL/GenBank/DDBJ databases">
        <authorList>
            <consortium name="The Salmonella enterica serovar Paratyphi B Genome Sequencing Project"/>
            <person name="McClelland M."/>
            <person name="Sanderson E.K."/>
            <person name="Porwollik S."/>
            <person name="Spieth J."/>
            <person name="Clifton W.S."/>
            <person name="Fulton R."/>
            <person name="Cordes M."/>
            <person name="Wollam A."/>
            <person name="Shah N."/>
            <person name="Pepin K."/>
            <person name="Bhonagiri V."/>
            <person name="Nash W."/>
            <person name="Johnson M."/>
            <person name="Thiruvilangam P."/>
            <person name="Wilson R."/>
        </authorList>
    </citation>
    <scope>NUCLEOTIDE SEQUENCE [LARGE SCALE GENOMIC DNA]</scope>
    <source>
        <strain>ATCC BAA-1250 / SPB7</strain>
    </source>
</reference>
<name>PEPQ_SALPB</name>
<evidence type="ECO:0000255" key="1">
    <source>
        <dbReference type="HAMAP-Rule" id="MF_01279"/>
    </source>
</evidence>
<proteinExistence type="inferred from homology"/>
<dbReference type="EC" id="3.4.13.9" evidence="1"/>
<dbReference type="EMBL" id="CP000886">
    <property type="protein sequence ID" value="ABX70239.1"/>
    <property type="molecule type" value="Genomic_DNA"/>
</dbReference>
<dbReference type="RefSeq" id="WP_000444528.1">
    <property type="nucleotide sequence ID" value="NC_010102.1"/>
</dbReference>
<dbReference type="SMR" id="A9MYB1"/>
<dbReference type="MEROPS" id="M24.003"/>
<dbReference type="KEGG" id="spq:SPAB_04940"/>
<dbReference type="PATRIC" id="fig|1016998.12.peg.4638"/>
<dbReference type="HOGENOM" id="CLU_050675_0_0_6"/>
<dbReference type="BioCyc" id="SENT1016998:SPAB_RS20095-MONOMER"/>
<dbReference type="Proteomes" id="UP000008556">
    <property type="component" value="Chromosome"/>
</dbReference>
<dbReference type="GO" id="GO:0005829">
    <property type="term" value="C:cytosol"/>
    <property type="evidence" value="ECO:0007669"/>
    <property type="project" value="TreeGrafter"/>
</dbReference>
<dbReference type="GO" id="GO:0004177">
    <property type="term" value="F:aminopeptidase activity"/>
    <property type="evidence" value="ECO:0007669"/>
    <property type="project" value="TreeGrafter"/>
</dbReference>
<dbReference type="GO" id="GO:0046872">
    <property type="term" value="F:metal ion binding"/>
    <property type="evidence" value="ECO:0007669"/>
    <property type="project" value="UniProtKB-KW"/>
</dbReference>
<dbReference type="GO" id="GO:0008235">
    <property type="term" value="F:metalloexopeptidase activity"/>
    <property type="evidence" value="ECO:0007669"/>
    <property type="project" value="UniProtKB-UniRule"/>
</dbReference>
<dbReference type="GO" id="GO:0016795">
    <property type="term" value="F:phosphoric triester hydrolase activity"/>
    <property type="evidence" value="ECO:0007669"/>
    <property type="project" value="InterPro"/>
</dbReference>
<dbReference type="GO" id="GO:0102009">
    <property type="term" value="F:proline dipeptidase activity"/>
    <property type="evidence" value="ECO:0007669"/>
    <property type="project" value="UniProtKB-EC"/>
</dbReference>
<dbReference type="GO" id="GO:0006508">
    <property type="term" value="P:proteolysis"/>
    <property type="evidence" value="ECO:0007669"/>
    <property type="project" value="UniProtKB-KW"/>
</dbReference>
<dbReference type="CDD" id="cd01087">
    <property type="entry name" value="Prolidase"/>
    <property type="match status" value="1"/>
</dbReference>
<dbReference type="FunFam" id="3.40.350.10:FF:000002">
    <property type="entry name" value="Xaa-Pro dipeptidase"/>
    <property type="match status" value="1"/>
</dbReference>
<dbReference type="FunFam" id="3.90.230.10:FF:000006">
    <property type="entry name" value="Xaa-Pro dipeptidase"/>
    <property type="match status" value="1"/>
</dbReference>
<dbReference type="Gene3D" id="3.90.230.10">
    <property type="entry name" value="Creatinase/methionine aminopeptidase superfamily"/>
    <property type="match status" value="1"/>
</dbReference>
<dbReference type="Gene3D" id="3.40.350.10">
    <property type="entry name" value="Creatinase/prolidase N-terminal domain"/>
    <property type="match status" value="1"/>
</dbReference>
<dbReference type="HAMAP" id="MF_01279">
    <property type="entry name" value="X_Pro_dipeptid"/>
    <property type="match status" value="1"/>
</dbReference>
<dbReference type="InterPro" id="IPR029149">
    <property type="entry name" value="Creatin/AminoP/Spt16_N"/>
</dbReference>
<dbReference type="InterPro" id="IPR036005">
    <property type="entry name" value="Creatinase/aminopeptidase-like"/>
</dbReference>
<dbReference type="InterPro" id="IPR048819">
    <property type="entry name" value="PepQ_N"/>
</dbReference>
<dbReference type="InterPro" id="IPR000994">
    <property type="entry name" value="Pept_M24"/>
</dbReference>
<dbReference type="InterPro" id="IPR001131">
    <property type="entry name" value="Peptidase_M24B_aminopep-P_CS"/>
</dbReference>
<dbReference type="InterPro" id="IPR052433">
    <property type="entry name" value="X-Pro_dipept-like"/>
</dbReference>
<dbReference type="InterPro" id="IPR022846">
    <property type="entry name" value="X_Pro_dipept"/>
</dbReference>
<dbReference type="NCBIfam" id="NF010133">
    <property type="entry name" value="PRK13607.1"/>
    <property type="match status" value="1"/>
</dbReference>
<dbReference type="PANTHER" id="PTHR43226">
    <property type="entry name" value="XAA-PRO AMINOPEPTIDASE 3"/>
    <property type="match status" value="1"/>
</dbReference>
<dbReference type="PANTHER" id="PTHR43226:SF8">
    <property type="entry name" value="XAA-PRO DIPEPTIDASE"/>
    <property type="match status" value="1"/>
</dbReference>
<dbReference type="Pfam" id="PF21216">
    <property type="entry name" value="PepQ_N"/>
    <property type="match status" value="1"/>
</dbReference>
<dbReference type="Pfam" id="PF00557">
    <property type="entry name" value="Peptidase_M24"/>
    <property type="match status" value="1"/>
</dbReference>
<dbReference type="SUPFAM" id="SSF55920">
    <property type="entry name" value="Creatinase/aminopeptidase"/>
    <property type="match status" value="1"/>
</dbReference>
<dbReference type="PROSITE" id="PS00491">
    <property type="entry name" value="PROLINE_PEPTIDASE"/>
    <property type="match status" value="1"/>
</dbReference>
<comment type="function">
    <text evidence="1">Splits dipeptides with a prolyl residue in the C-terminal position.</text>
</comment>
<comment type="catalytic activity">
    <reaction evidence="1">
        <text>Xaa-L-Pro dipeptide + H2O = an L-alpha-amino acid + L-proline</text>
        <dbReference type="Rhea" id="RHEA:76407"/>
        <dbReference type="ChEBI" id="CHEBI:15377"/>
        <dbReference type="ChEBI" id="CHEBI:59869"/>
        <dbReference type="ChEBI" id="CHEBI:60039"/>
        <dbReference type="ChEBI" id="CHEBI:195196"/>
        <dbReference type="EC" id="3.4.13.9"/>
    </reaction>
</comment>
<comment type="cofactor">
    <cofactor evidence="1">
        <name>Mn(2+)</name>
        <dbReference type="ChEBI" id="CHEBI:29035"/>
    </cofactor>
    <text evidence="1">Binds 2 manganese ions per subunit.</text>
</comment>
<comment type="similarity">
    <text evidence="1">Belongs to the peptidase M24B family. Bacterial-type prolidase subfamily.</text>
</comment>